<organism>
    <name type="scientific">Prochlorococcus marinus subsp. pastoris (strain CCMP1986 / NIES-2087 / MED4)</name>
    <dbReference type="NCBI Taxonomy" id="59919"/>
    <lineage>
        <taxon>Bacteria</taxon>
        <taxon>Bacillati</taxon>
        <taxon>Cyanobacteriota</taxon>
        <taxon>Cyanophyceae</taxon>
        <taxon>Synechococcales</taxon>
        <taxon>Prochlorococcaceae</taxon>
        <taxon>Prochlorococcus</taxon>
    </lineage>
</organism>
<name>RUVC_PROMP</name>
<evidence type="ECO:0000255" key="1">
    <source>
        <dbReference type="HAMAP-Rule" id="MF_00034"/>
    </source>
</evidence>
<reference key="1">
    <citation type="journal article" date="2003" name="Nature">
        <title>Genome divergence in two Prochlorococcus ecotypes reflects oceanic niche differentiation.</title>
        <authorList>
            <person name="Rocap G."/>
            <person name="Larimer F.W."/>
            <person name="Lamerdin J.E."/>
            <person name="Malfatti S."/>
            <person name="Chain P."/>
            <person name="Ahlgren N.A."/>
            <person name="Arellano A."/>
            <person name="Coleman M."/>
            <person name="Hauser L."/>
            <person name="Hess W.R."/>
            <person name="Johnson Z.I."/>
            <person name="Land M.L."/>
            <person name="Lindell D."/>
            <person name="Post A.F."/>
            <person name="Regala W."/>
            <person name="Shah M."/>
            <person name="Shaw S.L."/>
            <person name="Steglich C."/>
            <person name="Sullivan M.B."/>
            <person name="Ting C.S."/>
            <person name="Tolonen A."/>
            <person name="Webb E.A."/>
            <person name="Zinser E.R."/>
            <person name="Chisholm S.W."/>
        </authorList>
    </citation>
    <scope>NUCLEOTIDE SEQUENCE [LARGE SCALE GENOMIC DNA]</scope>
    <source>
        <strain>CCMP1986 / NIES-2087 / MED4</strain>
    </source>
</reference>
<keyword id="KW-0963">Cytoplasm</keyword>
<keyword id="KW-0227">DNA damage</keyword>
<keyword id="KW-0233">DNA recombination</keyword>
<keyword id="KW-0234">DNA repair</keyword>
<keyword id="KW-0238">DNA-binding</keyword>
<keyword id="KW-0255">Endonuclease</keyword>
<keyword id="KW-0378">Hydrolase</keyword>
<keyword id="KW-0460">Magnesium</keyword>
<keyword id="KW-0479">Metal-binding</keyword>
<keyword id="KW-0540">Nuclease</keyword>
<feature type="chain" id="PRO_0000183120" description="Crossover junction endodeoxyribonuclease RuvC">
    <location>
        <begin position="1"/>
        <end position="157"/>
    </location>
</feature>
<feature type="active site" evidence="1">
    <location>
        <position position="7"/>
    </location>
</feature>
<feature type="active site" evidence="1">
    <location>
        <position position="67"/>
    </location>
</feature>
<feature type="active site" evidence="1">
    <location>
        <position position="139"/>
    </location>
</feature>
<feature type="binding site" evidence="1">
    <location>
        <position position="7"/>
    </location>
    <ligand>
        <name>Mg(2+)</name>
        <dbReference type="ChEBI" id="CHEBI:18420"/>
        <label>1</label>
    </ligand>
</feature>
<feature type="binding site" evidence="1">
    <location>
        <position position="67"/>
    </location>
    <ligand>
        <name>Mg(2+)</name>
        <dbReference type="ChEBI" id="CHEBI:18420"/>
        <label>2</label>
    </ligand>
</feature>
<feature type="binding site" evidence="1">
    <location>
        <position position="139"/>
    </location>
    <ligand>
        <name>Mg(2+)</name>
        <dbReference type="ChEBI" id="CHEBI:18420"/>
        <label>1</label>
    </ligand>
</feature>
<comment type="function">
    <text evidence="1">The RuvA-RuvB-RuvC complex processes Holliday junction (HJ) DNA during genetic recombination and DNA repair. Endonuclease that resolves HJ intermediates. Cleaves cruciform DNA by making single-stranded nicks across the HJ at symmetrical positions within the homologous arms, yielding a 5'-phosphate and a 3'-hydroxyl group; requires a central core of homology in the junction. The consensus cleavage sequence is 5'-(A/T)TT(C/G)-3'. Cleavage occurs on the 3'-side of the TT dinucleotide at the point of strand exchange. HJ branch migration catalyzed by RuvA-RuvB allows RuvC to scan DNA until it finds its consensus sequence, where it cleaves and resolves the cruciform DNA.</text>
</comment>
<comment type="catalytic activity">
    <reaction evidence="1">
        <text>Endonucleolytic cleavage at a junction such as a reciprocal single-stranded crossover between two homologous DNA duplexes (Holliday junction).</text>
        <dbReference type="EC" id="3.1.21.10"/>
    </reaction>
</comment>
<comment type="cofactor">
    <cofactor evidence="1">
        <name>Mg(2+)</name>
        <dbReference type="ChEBI" id="CHEBI:18420"/>
    </cofactor>
    <text evidence="1">Binds 2 Mg(2+) ion per subunit.</text>
</comment>
<comment type="subunit">
    <text evidence="1">Homodimer which binds Holliday junction (HJ) DNA. The HJ becomes 2-fold symmetrical on binding to RuvC with unstacked arms; it has a different conformation from HJ DNA in complex with RuvA. In the full resolvosome a probable DNA-RuvA(4)-RuvB(12)-RuvC(2) complex forms which resolves the HJ.</text>
</comment>
<comment type="subcellular location">
    <subcellularLocation>
        <location evidence="1">Cytoplasm</location>
    </subcellularLocation>
</comment>
<comment type="similarity">
    <text evidence="1">Belongs to the RuvC family.</text>
</comment>
<gene>
    <name evidence="1" type="primary">ruvC</name>
    <name type="ordered locus">PMM1054</name>
</gene>
<accession>Q7V132</accession>
<protein>
    <recommendedName>
        <fullName evidence="1">Crossover junction endodeoxyribonuclease RuvC</fullName>
        <ecNumber evidence="1">3.1.21.10</ecNumber>
    </recommendedName>
    <alternativeName>
        <fullName evidence="1">Holliday junction nuclease RuvC</fullName>
    </alternativeName>
    <alternativeName>
        <fullName evidence="1">Holliday junction resolvase RuvC</fullName>
    </alternativeName>
</protein>
<sequence length="157" mass="17397">MRIIGIDPGLGRVGYGIIEIQNEKKIFLDCGVIETNKNKGEGDRLYEIFNDLNTLIDQWKPDIAAVEKFFFYRSSTTISVVQARGVIMMVFAFKSIKVSEYAPSQVKLTIAGSGKASKKEVIEAVMYNLNLTRAPKPDDSADALAIALTKLNEEGFN</sequence>
<dbReference type="EC" id="3.1.21.10" evidence="1"/>
<dbReference type="EMBL" id="BX548174">
    <property type="protein sequence ID" value="CAE19513.1"/>
    <property type="molecule type" value="Genomic_DNA"/>
</dbReference>
<dbReference type="RefSeq" id="WP_011132687.1">
    <property type="nucleotide sequence ID" value="NC_005072.1"/>
</dbReference>
<dbReference type="SMR" id="Q7V132"/>
<dbReference type="STRING" id="59919.PMM1054"/>
<dbReference type="KEGG" id="pmm:PMM1054"/>
<dbReference type="eggNOG" id="COG0817">
    <property type="taxonomic scope" value="Bacteria"/>
</dbReference>
<dbReference type="HOGENOM" id="CLU_091257_3_1_3"/>
<dbReference type="OrthoDB" id="9805499at2"/>
<dbReference type="Proteomes" id="UP000001026">
    <property type="component" value="Chromosome"/>
</dbReference>
<dbReference type="GO" id="GO:0005737">
    <property type="term" value="C:cytoplasm"/>
    <property type="evidence" value="ECO:0007669"/>
    <property type="project" value="UniProtKB-SubCell"/>
</dbReference>
<dbReference type="GO" id="GO:0048476">
    <property type="term" value="C:Holliday junction resolvase complex"/>
    <property type="evidence" value="ECO:0007669"/>
    <property type="project" value="UniProtKB-UniRule"/>
</dbReference>
<dbReference type="GO" id="GO:0008821">
    <property type="term" value="F:crossover junction DNA endonuclease activity"/>
    <property type="evidence" value="ECO:0007669"/>
    <property type="project" value="UniProtKB-UniRule"/>
</dbReference>
<dbReference type="GO" id="GO:0003677">
    <property type="term" value="F:DNA binding"/>
    <property type="evidence" value="ECO:0007669"/>
    <property type="project" value="UniProtKB-KW"/>
</dbReference>
<dbReference type="GO" id="GO:0000287">
    <property type="term" value="F:magnesium ion binding"/>
    <property type="evidence" value="ECO:0007669"/>
    <property type="project" value="UniProtKB-UniRule"/>
</dbReference>
<dbReference type="GO" id="GO:0006310">
    <property type="term" value="P:DNA recombination"/>
    <property type="evidence" value="ECO:0007669"/>
    <property type="project" value="UniProtKB-UniRule"/>
</dbReference>
<dbReference type="GO" id="GO:0006281">
    <property type="term" value="P:DNA repair"/>
    <property type="evidence" value="ECO:0007669"/>
    <property type="project" value="UniProtKB-UniRule"/>
</dbReference>
<dbReference type="CDD" id="cd16962">
    <property type="entry name" value="RuvC"/>
    <property type="match status" value="1"/>
</dbReference>
<dbReference type="FunFam" id="3.30.420.10:FF:000002">
    <property type="entry name" value="Crossover junction endodeoxyribonuclease RuvC"/>
    <property type="match status" value="1"/>
</dbReference>
<dbReference type="Gene3D" id="3.30.420.10">
    <property type="entry name" value="Ribonuclease H-like superfamily/Ribonuclease H"/>
    <property type="match status" value="1"/>
</dbReference>
<dbReference type="HAMAP" id="MF_00034">
    <property type="entry name" value="RuvC"/>
    <property type="match status" value="1"/>
</dbReference>
<dbReference type="InterPro" id="IPR012337">
    <property type="entry name" value="RNaseH-like_sf"/>
</dbReference>
<dbReference type="InterPro" id="IPR036397">
    <property type="entry name" value="RNaseH_sf"/>
</dbReference>
<dbReference type="InterPro" id="IPR020563">
    <property type="entry name" value="X-over_junc_endoDNase_Mg_BS"/>
</dbReference>
<dbReference type="InterPro" id="IPR002176">
    <property type="entry name" value="X-over_junc_endoDNase_RuvC"/>
</dbReference>
<dbReference type="NCBIfam" id="NF000711">
    <property type="entry name" value="PRK00039.2-1"/>
    <property type="match status" value="1"/>
</dbReference>
<dbReference type="NCBIfam" id="TIGR00228">
    <property type="entry name" value="ruvC"/>
    <property type="match status" value="1"/>
</dbReference>
<dbReference type="PANTHER" id="PTHR30194">
    <property type="entry name" value="CROSSOVER JUNCTION ENDODEOXYRIBONUCLEASE RUVC"/>
    <property type="match status" value="1"/>
</dbReference>
<dbReference type="PANTHER" id="PTHR30194:SF3">
    <property type="entry name" value="CROSSOVER JUNCTION ENDODEOXYRIBONUCLEASE RUVC"/>
    <property type="match status" value="1"/>
</dbReference>
<dbReference type="Pfam" id="PF02075">
    <property type="entry name" value="RuvC"/>
    <property type="match status" value="1"/>
</dbReference>
<dbReference type="PRINTS" id="PR00696">
    <property type="entry name" value="RSOLVASERUVC"/>
</dbReference>
<dbReference type="SUPFAM" id="SSF53098">
    <property type="entry name" value="Ribonuclease H-like"/>
    <property type="match status" value="1"/>
</dbReference>
<dbReference type="PROSITE" id="PS01321">
    <property type="entry name" value="RUVC"/>
    <property type="match status" value="1"/>
</dbReference>
<proteinExistence type="inferred from homology"/>